<dbReference type="PIR" id="A00013">
    <property type="entry name" value="CCPY"/>
</dbReference>
<dbReference type="RefSeq" id="XP_005513534.2">
    <property type="nucleotide sequence ID" value="XM_005513477.2"/>
</dbReference>
<dbReference type="PDB" id="1KTD">
    <property type="method" value="X-ray"/>
    <property type="resolution" value="2.40 A"/>
    <property type="chains" value="B/D=93-105"/>
</dbReference>
<dbReference type="PDBsum" id="1KTD"/>
<dbReference type="SMR" id="P00021"/>
<dbReference type="ABCD" id="P00021">
    <property type="antibodies" value="23 sequenced antibodies"/>
</dbReference>
<dbReference type="KEGG" id="clv:102085712"/>
<dbReference type="eggNOG" id="KOG3453">
    <property type="taxonomic scope" value="Eukaryota"/>
</dbReference>
<dbReference type="OrthoDB" id="185058at8782"/>
<dbReference type="GO" id="GO:0005829">
    <property type="term" value="C:cytosol"/>
    <property type="evidence" value="ECO:0000250"/>
    <property type="project" value="UniProtKB"/>
</dbReference>
<dbReference type="GO" id="GO:0005758">
    <property type="term" value="C:mitochondrial intermembrane space"/>
    <property type="evidence" value="ECO:0007669"/>
    <property type="project" value="UniProtKB-SubCell"/>
</dbReference>
<dbReference type="GO" id="GO:0009055">
    <property type="term" value="F:electron transfer activity"/>
    <property type="evidence" value="ECO:0007669"/>
    <property type="project" value="InterPro"/>
</dbReference>
<dbReference type="GO" id="GO:0020037">
    <property type="term" value="F:heme binding"/>
    <property type="evidence" value="ECO:0007669"/>
    <property type="project" value="InterPro"/>
</dbReference>
<dbReference type="GO" id="GO:0046872">
    <property type="term" value="F:metal ion binding"/>
    <property type="evidence" value="ECO:0007669"/>
    <property type="project" value="UniProtKB-KW"/>
</dbReference>
<dbReference type="FunFam" id="1.10.760.10:FF:000008">
    <property type="entry name" value="Cytochrome c"/>
    <property type="match status" value="1"/>
</dbReference>
<dbReference type="Gene3D" id="1.10.760.10">
    <property type="entry name" value="Cytochrome c-like domain"/>
    <property type="match status" value="1"/>
</dbReference>
<dbReference type="InterPro" id="IPR009056">
    <property type="entry name" value="Cyt_c-like_dom"/>
</dbReference>
<dbReference type="InterPro" id="IPR036909">
    <property type="entry name" value="Cyt_c-like_dom_sf"/>
</dbReference>
<dbReference type="InterPro" id="IPR002327">
    <property type="entry name" value="Cyt_c_1A/1B"/>
</dbReference>
<dbReference type="PANTHER" id="PTHR11961">
    <property type="entry name" value="CYTOCHROME C"/>
    <property type="match status" value="1"/>
</dbReference>
<dbReference type="Pfam" id="PF00034">
    <property type="entry name" value="Cytochrom_C"/>
    <property type="match status" value="1"/>
</dbReference>
<dbReference type="PRINTS" id="PR00604">
    <property type="entry name" value="CYTCHRMECIAB"/>
</dbReference>
<dbReference type="SUPFAM" id="SSF46626">
    <property type="entry name" value="Cytochrome c"/>
    <property type="match status" value="1"/>
</dbReference>
<dbReference type="PROSITE" id="PS51007">
    <property type="entry name" value="CYTC"/>
    <property type="match status" value="1"/>
</dbReference>
<sequence length="105" mass="11664">MGDIEKGKKIFVQKCSQCHTVEKGGKHKTGPNLHGLFGRKTGQAEGFSYTDANKNKGITWGEDTLMEYLENPKKYIPGTKMIFAGIKKKAERADLIAYLKQATAK</sequence>
<comment type="function">
    <text>Electron carrier protein. The oxidized form of the cytochrome c heme group can accept an electron from the heme group of the cytochrome c1 subunit of cytochrome reductase. Cytochrome c then transfers this electron to the cytochrome oxidase complex, the final protein carrier in the mitochondrial electron-transport chain.</text>
</comment>
<comment type="subcellular location">
    <subcellularLocation>
        <location>Mitochondrion intermembrane space</location>
    </subcellularLocation>
    <text>Loosely associated with the inner membrane.</text>
</comment>
<comment type="PTM">
    <text>Binds 1 heme c group covalently per subunit.</text>
</comment>
<comment type="similarity">
    <text evidence="2">Belongs to the cytochrome c family.</text>
</comment>
<comment type="online information" name="Protein Spotlight">
    <link uri="https://www.proteinspotlight.org/back_issues/076"/>
    <text>Life shuttle - Issue 76 of November 2006</text>
</comment>
<proteinExistence type="evidence at protein level"/>
<gene>
    <name type="primary">CYC</name>
</gene>
<accession>P00021</accession>
<evidence type="ECO:0000250" key="1"/>
<evidence type="ECO:0000305" key="2"/>
<name>CYC_COLLI</name>
<feature type="initiator methionine" description="Removed">
    <location>
        <position position="1"/>
    </location>
</feature>
<feature type="chain" id="PRO_0000108240" description="Cytochrome c">
    <location>
        <begin position="2"/>
        <end position="105"/>
    </location>
</feature>
<feature type="binding site" description="covalent">
    <location>
        <position position="15"/>
    </location>
    <ligand>
        <name>heme c</name>
        <dbReference type="ChEBI" id="CHEBI:61717"/>
    </ligand>
</feature>
<feature type="binding site" description="covalent">
    <location>
        <position position="18"/>
    </location>
    <ligand>
        <name>heme c</name>
        <dbReference type="ChEBI" id="CHEBI:61717"/>
    </ligand>
</feature>
<feature type="binding site" description="axial binding residue">
    <location>
        <position position="19"/>
    </location>
    <ligand>
        <name>heme c</name>
        <dbReference type="ChEBI" id="CHEBI:61717"/>
    </ligand>
    <ligandPart>
        <name>Fe</name>
        <dbReference type="ChEBI" id="CHEBI:18248"/>
    </ligandPart>
</feature>
<feature type="binding site" description="axial binding residue">
    <location>
        <position position="81"/>
    </location>
    <ligand>
        <name>heme c</name>
        <dbReference type="ChEBI" id="CHEBI:61717"/>
    </ligand>
    <ligandPart>
        <name>Fe</name>
        <dbReference type="ChEBI" id="CHEBI:18248"/>
    </ligandPart>
</feature>
<feature type="modified residue" description="N-acetylglycine" evidence="1">
    <location>
        <position position="2"/>
    </location>
</feature>
<protein>
    <recommendedName>
        <fullName>Cytochrome c</fullName>
    </recommendedName>
</protein>
<organism>
    <name type="scientific">Columba livia</name>
    <name type="common">Rock dove</name>
    <dbReference type="NCBI Taxonomy" id="8932"/>
    <lineage>
        <taxon>Eukaryota</taxon>
        <taxon>Metazoa</taxon>
        <taxon>Chordata</taxon>
        <taxon>Craniata</taxon>
        <taxon>Vertebrata</taxon>
        <taxon>Euteleostomi</taxon>
        <taxon>Archelosauria</taxon>
        <taxon>Archosauria</taxon>
        <taxon>Dinosauria</taxon>
        <taxon>Saurischia</taxon>
        <taxon>Theropoda</taxon>
        <taxon>Coelurosauria</taxon>
        <taxon>Aves</taxon>
        <taxon>Neognathae</taxon>
        <taxon>Neoaves</taxon>
        <taxon>Columbimorphae</taxon>
        <taxon>Columbiformes</taxon>
        <taxon>Columbidae</taxon>
        <taxon>Columba</taxon>
    </lineage>
</organism>
<keyword id="KW-0002">3D-structure</keyword>
<keyword id="KW-0007">Acetylation</keyword>
<keyword id="KW-0903">Direct protein sequencing</keyword>
<keyword id="KW-0249">Electron transport</keyword>
<keyword id="KW-0349">Heme</keyword>
<keyword id="KW-0408">Iron</keyword>
<keyword id="KW-0479">Metal-binding</keyword>
<keyword id="KW-0496">Mitochondrion</keyword>
<keyword id="KW-0679">Respiratory chain</keyword>
<keyword id="KW-0813">Transport</keyword>
<reference key="1">
    <citation type="book" date="1968" name="Handbook of biochemistry">
        <editorList>
            <person name="Sober H.A."/>
        </editorList>
        <authorList>
            <person name="Wojciech R."/>
            <person name="Margoliash E."/>
        </authorList>
    </citation>
    <scope>PRELIMINARY PROTEIN SEQUENCE OF 2-105</scope>
    <scope>PROTEIN SEQUENCE OF 90-92; 93-100 AND 101-105</scope>
</reference>
<reference key="2">
    <citation type="journal article" date="2002" name="J. Exp. Med.">
        <title>Structural basis of cytochrome c presentation by IE(k).</title>
        <authorList>
            <person name="Fremont D.H."/>
            <person name="Dai S."/>
            <person name="Chiang H."/>
            <person name="Crawford F."/>
            <person name="Marrack P."/>
            <person name="Kappler J."/>
        </authorList>
    </citation>
    <scope>X-RAY CRYSTALLOGRAPHY (2.4 ANGSTROMS)</scope>
</reference>